<dbReference type="EMBL" id="CP000284">
    <property type="protein sequence ID" value="ABE48338.1"/>
    <property type="molecule type" value="Genomic_DNA"/>
</dbReference>
<dbReference type="RefSeq" id="WP_011478435.1">
    <property type="nucleotide sequence ID" value="NC_007947.1"/>
</dbReference>
<dbReference type="SMR" id="Q1GXD6"/>
<dbReference type="STRING" id="265072.Mfla_0067"/>
<dbReference type="KEGG" id="mfa:Mfla_0067"/>
<dbReference type="eggNOG" id="COG0532">
    <property type="taxonomic scope" value="Bacteria"/>
</dbReference>
<dbReference type="HOGENOM" id="CLU_006301_6_0_4"/>
<dbReference type="OrthoDB" id="9811804at2"/>
<dbReference type="Proteomes" id="UP000002440">
    <property type="component" value="Chromosome"/>
</dbReference>
<dbReference type="GO" id="GO:0005829">
    <property type="term" value="C:cytosol"/>
    <property type="evidence" value="ECO:0007669"/>
    <property type="project" value="TreeGrafter"/>
</dbReference>
<dbReference type="GO" id="GO:0005525">
    <property type="term" value="F:GTP binding"/>
    <property type="evidence" value="ECO:0007669"/>
    <property type="project" value="UniProtKB-KW"/>
</dbReference>
<dbReference type="GO" id="GO:0003924">
    <property type="term" value="F:GTPase activity"/>
    <property type="evidence" value="ECO:0007669"/>
    <property type="project" value="UniProtKB-UniRule"/>
</dbReference>
<dbReference type="GO" id="GO:0097216">
    <property type="term" value="F:guanosine tetraphosphate binding"/>
    <property type="evidence" value="ECO:0007669"/>
    <property type="project" value="UniProtKB-ARBA"/>
</dbReference>
<dbReference type="GO" id="GO:0003743">
    <property type="term" value="F:translation initiation factor activity"/>
    <property type="evidence" value="ECO:0007669"/>
    <property type="project" value="UniProtKB-UniRule"/>
</dbReference>
<dbReference type="CDD" id="cd01887">
    <property type="entry name" value="IF2_eIF5B"/>
    <property type="match status" value="1"/>
</dbReference>
<dbReference type="CDD" id="cd03702">
    <property type="entry name" value="IF2_mtIF2_II"/>
    <property type="match status" value="1"/>
</dbReference>
<dbReference type="CDD" id="cd03692">
    <property type="entry name" value="mtIF2_IVc"/>
    <property type="match status" value="1"/>
</dbReference>
<dbReference type="FunFam" id="2.40.30.10:FF:000007">
    <property type="entry name" value="Translation initiation factor IF-2"/>
    <property type="match status" value="1"/>
</dbReference>
<dbReference type="FunFam" id="2.40.30.10:FF:000008">
    <property type="entry name" value="Translation initiation factor IF-2"/>
    <property type="match status" value="1"/>
</dbReference>
<dbReference type="FunFam" id="3.40.50.10050:FF:000001">
    <property type="entry name" value="Translation initiation factor IF-2"/>
    <property type="match status" value="1"/>
</dbReference>
<dbReference type="FunFam" id="3.40.50.300:FF:000019">
    <property type="entry name" value="Translation initiation factor IF-2"/>
    <property type="match status" value="1"/>
</dbReference>
<dbReference type="Gene3D" id="3.40.50.300">
    <property type="entry name" value="P-loop containing nucleotide triphosphate hydrolases"/>
    <property type="match status" value="1"/>
</dbReference>
<dbReference type="Gene3D" id="3.30.56.50">
    <property type="entry name" value="Putative DNA-binding domain, N-terminal subdomain of bacterial translation initiation factor IF2"/>
    <property type="match status" value="1"/>
</dbReference>
<dbReference type="Gene3D" id="2.40.30.10">
    <property type="entry name" value="Translation factors"/>
    <property type="match status" value="2"/>
</dbReference>
<dbReference type="Gene3D" id="3.40.50.10050">
    <property type="entry name" value="Translation initiation factor IF- 2, domain 3"/>
    <property type="match status" value="1"/>
</dbReference>
<dbReference type="HAMAP" id="MF_00100_B">
    <property type="entry name" value="IF_2_B"/>
    <property type="match status" value="1"/>
</dbReference>
<dbReference type="InterPro" id="IPR009061">
    <property type="entry name" value="DNA-bd_dom_put_sf"/>
</dbReference>
<dbReference type="InterPro" id="IPR053905">
    <property type="entry name" value="EF-G-like_DII"/>
</dbReference>
<dbReference type="InterPro" id="IPR004161">
    <property type="entry name" value="EFTu-like_2"/>
</dbReference>
<dbReference type="InterPro" id="IPR013575">
    <property type="entry name" value="IF2_assoc_dom_bac"/>
</dbReference>
<dbReference type="InterPro" id="IPR044145">
    <property type="entry name" value="IF2_II"/>
</dbReference>
<dbReference type="InterPro" id="IPR006847">
    <property type="entry name" value="IF2_N"/>
</dbReference>
<dbReference type="InterPro" id="IPR027417">
    <property type="entry name" value="P-loop_NTPase"/>
</dbReference>
<dbReference type="InterPro" id="IPR005225">
    <property type="entry name" value="Small_GTP-bd"/>
</dbReference>
<dbReference type="InterPro" id="IPR000795">
    <property type="entry name" value="T_Tr_GTP-bd_dom"/>
</dbReference>
<dbReference type="InterPro" id="IPR000178">
    <property type="entry name" value="TF_IF2_bacterial-like"/>
</dbReference>
<dbReference type="InterPro" id="IPR015760">
    <property type="entry name" value="TIF_IF2"/>
</dbReference>
<dbReference type="InterPro" id="IPR023115">
    <property type="entry name" value="TIF_IF2_dom3"/>
</dbReference>
<dbReference type="InterPro" id="IPR036925">
    <property type="entry name" value="TIF_IF2_dom3_sf"/>
</dbReference>
<dbReference type="InterPro" id="IPR009000">
    <property type="entry name" value="Transl_B-barrel_sf"/>
</dbReference>
<dbReference type="NCBIfam" id="TIGR00487">
    <property type="entry name" value="IF-2"/>
    <property type="match status" value="1"/>
</dbReference>
<dbReference type="NCBIfam" id="TIGR00231">
    <property type="entry name" value="small_GTP"/>
    <property type="match status" value="1"/>
</dbReference>
<dbReference type="PANTHER" id="PTHR43381:SF5">
    <property type="entry name" value="TR-TYPE G DOMAIN-CONTAINING PROTEIN"/>
    <property type="match status" value="1"/>
</dbReference>
<dbReference type="PANTHER" id="PTHR43381">
    <property type="entry name" value="TRANSLATION INITIATION FACTOR IF-2-RELATED"/>
    <property type="match status" value="1"/>
</dbReference>
<dbReference type="Pfam" id="PF22042">
    <property type="entry name" value="EF-G_D2"/>
    <property type="match status" value="1"/>
</dbReference>
<dbReference type="Pfam" id="PF00009">
    <property type="entry name" value="GTP_EFTU"/>
    <property type="match status" value="1"/>
</dbReference>
<dbReference type="Pfam" id="PF03144">
    <property type="entry name" value="GTP_EFTU_D2"/>
    <property type="match status" value="1"/>
</dbReference>
<dbReference type="Pfam" id="PF11987">
    <property type="entry name" value="IF-2"/>
    <property type="match status" value="1"/>
</dbReference>
<dbReference type="Pfam" id="PF08364">
    <property type="entry name" value="IF2_assoc"/>
    <property type="match status" value="1"/>
</dbReference>
<dbReference type="Pfam" id="PF04760">
    <property type="entry name" value="IF2_N"/>
    <property type="match status" value="1"/>
</dbReference>
<dbReference type="SUPFAM" id="SSF52156">
    <property type="entry name" value="Initiation factor IF2/eIF5b, domain 3"/>
    <property type="match status" value="1"/>
</dbReference>
<dbReference type="SUPFAM" id="SSF52540">
    <property type="entry name" value="P-loop containing nucleoside triphosphate hydrolases"/>
    <property type="match status" value="1"/>
</dbReference>
<dbReference type="SUPFAM" id="SSF46955">
    <property type="entry name" value="Putative DNA-binding domain"/>
    <property type="match status" value="1"/>
</dbReference>
<dbReference type="SUPFAM" id="SSF50447">
    <property type="entry name" value="Translation proteins"/>
    <property type="match status" value="2"/>
</dbReference>
<dbReference type="PROSITE" id="PS51722">
    <property type="entry name" value="G_TR_2"/>
    <property type="match status" value="1"/>
</dbReference>
<dbReference type="PROSITE" id="PS01176">
    <property type="entry name" value="IF2"/>
    <property type="match status" value="1"/>
</dbReference>
<comment type="function">
    <text evidence="2">One of the essential components for the initiation of protein synthesis. Protects formylmethionyl-tRNA from spontaneous hydrolysis and promotes its binding to the 30S ribosomal subunits. Also involved in the hydrolysis of GTP during the formation of the 70S ribosomal complex.</text>
</comment>
<comment type="subcellular location">
    <subcellularLocation>
        <location evidence="2">Cytoplasm</location>
    </subcellularLocation>
</comment>
<comment type="similarity">
    <text evidence="2">Belongs to the TRAFAC class translation factor GTPase superfamily. Classic translation factor GTPase family. IF-2 subfamily.</text>
</comment>
<sequence>MGQSSVAQFASELGLPAELLLEQLRGAGVNKTAYDDVLTEQDKTSLLEYLRKEHGVQEPKNKITLTRKQVTEIKKSDSSGKARTIQVEVRKKRVLVRRDPALEPVVAEESAEIAPAAVIDEPTLQAAPVVLPEPEPVVEAVPEPVAVEQELESEPEPTVAPAEPEAGEVAVAVDEKPTADARPKLTARELLGAEELALREREAKRQAALMAIQAEELRKKQELAQRRQEEAKRAAEAAANKLSEGTLHKPVAKEAPKPEEKNAKKTGKSGGKDWNDSDGKKRGGVKGRSDAGVAGQGWRAKGSKSKSKNNENQQHAFTAPTEPIVHDVLVPETITVGDLAHKMAVKASEVIKTLMKMGMMVTINQVLDQETAIIIVEEMGHNAKAAASNDPEAFLDEAEHAEAVQEPRPPVVTVMGHVDHGKTSLLDYIRRSRVASGEAGGITQHIGAYHVETPRGMVTFLDTPGHEAFTAMRARGAKATDVVILVVAADDGVMPQTIEAVHHAKAANVPIVVAVNKIDKPEANPERVKQELVSHEVVPEDWGGDTMFVEVSAKTGAGIDNLLEAVLLQAEVLELKAPKNIPAKGLVIEGRLDKGRGPVSTILVQSGTLQRGDMILAGTAYGRVRAMLDESGRDVKEAGPSIPVEILGLSDVPSAGEEVIVLNDERKAREIALFRQGKFRDVKLAKQQAAKLESMFEQMGEGEVKVLHLIIKSDVQGSYEALSTSLQKLSTDEVKVNIIHTGVGAISESDVNLAAASKAVLIGFNVRADAGARKLIESTGVDVRYYNIIYEAVDEVKAALGGMLSPEQKENVIGTVEIREVFRISKVGSVAGCYVQDGVVRRNSKVRLIRDNVVIHTGELDSLKRFKDDVKEVKSNFECGLSLKNYNEIEVGDILEVFEVVEVARTL</sequence>
<reference key="1">
    <citation type="submission" date="2006-03" db="EMBL/GenBank/DDBJ databases">
        <title>Complete sequence of Methylobacillus flagellatus KT.</title>
        <authorList>
            <consortium name="US DOE Joint Genome Institute"/>
            <person name="Copeland A."/>
            <person name="Lucas S."/>
            <person name="Lapidus A."/>
            <person name="Barry K."/>
            <person name="Detter J.C."/>
            <person name="Glavina del Rio T."/>
            <person name="Hammon N."/>
            <person name="Israni S."/>
            <person name="Dalin E."/>
            <person name="Tice H."/>
            <person name="Pitluck S."/>
            <person name="Brettin T."/>
            <person name="Bruce D."/>
            <person name="Han C."/>
            <person name="Tapia R."/>
            <person name="Saunders E."/>
            <person name="Gilna P."/>
            <person name="Schmutz J."/>
            <person name="Larimer F."/>
            <person name="Land M."/>
            <person name="Kyrpides N."/>
            <person name="Anderson I."/>
            <person name="Richardson P."/>
        </authorList>
    </citation>
    <scope>NUCLEOTIDE SEQUENCE [LARGE SCALE GENOMIC DNA]</scope>
    <source>
        <strain>ATCC 51484 / DSM 6875 / VKM B-1610 / KT</strain>
    </source>
</reference>
<proteinExistence type="inferred from homology"/>
<keyword id="KW-0963">Cytoplasm</keyword>
<keyword id="KW-0342">GTP-binding</keyword>
<keyword id="KW-0396">Initiation factor</keyword>
<keyword id="KW-0547">Nucleotide-binding</keyword>
<keyword id="KW-0648">Protein biosynthesis</keyword>
<keyword id="KW-1185">Reference proteome</keyword>
<name>IF2_METFK</name>
<protein>
    <recommendedName>
        <fullName evidence="2">Translation initiation factor IF-2</fullName>
    </recommendedName>
</protein>
<evidence type="ECO:0000250" key="1"/>
<evidence type="ECO:0000255" key="2">
    <source>
        <dbReference type="HAMAP-Rule" id="MF_00100"/>
    </source>
</evidence>
<evidence type="ECO:0000256" key="3">
    <source>
        <dbReference type="SAM" id="MobiDB-lite"/>
    </source>
</evidence>
<feature type="chain" id="PRO_1000008272" description="Translation initiation factor IF-2">
    <location>
        <begin position="1"/>
        <end position="907"/>
    </location>
</feature>
<feature type="domain" description="tr-type G">
    <location>
        <begin position="407"/>
        <end position="576"/>
    </location>
</feature>
<feature type="region of interest" description="Disordered" evidence="3">
    <location>
        <begin position="223"/>
        <end position="320"/>
    </location>
</feature>
<feature type="region of interest" description="G1" evidence="1">
    <location>
        <begin position="416"/>
        <end position="423"/>
    </location>
</feature>
<feature type="region of interest" description="G2" evidence="1">
    <location>
        <begin position="441"/>
        <end position="445"/>
    </location>
</feature>
<feature type="region of interest" description="G3" evidence="1">
    <location>
        <begin position="462"/>
        <end position="465"/>
    </location>
</feature>
<feature type="region of interest" description="G4" evidence="1">
    <location>
        <begin position="516"/>
        <end position="519"/>
    </location>
</feature>
<feature type="region of interest" description="G5" evidence="1">
    <location>
        <begin position="552"/>
        <end position="554"/>
    </location>
</feature>
<feature type="compositionally biased region" description="Basic and acidic residues" evidence="3">
    <location>
        <begin position="223"/>
        <end position="235"/>
    </location>
</feature>
<feature type="compositionally biased region" description="Basic and acidic residues" evidence="3">
    <location>
        <begin position="251"/>
        <end position="263"/>
    </location>
</feature>
<feature type="compositionally biased region" description="Basic and acidic residues" evidence="3">
    <location>
        <begin position="270"/>
        <end position="281"/>
    </location>
</feature>
<feature type="binding site" evidence="2">
    <location>
        <begin position="416"/>
        <end position="423"/>
    </location>
    <ligand>
        <name>GTP</name>
        <dbReference type="ChEBI" id="CHEBI:37565"/>
    </ligand>
</feature>
<feature type="binding site" evidence="2">
    <location>
        <begin position="462"/>
        <end position="466"/>
    </location>
    <ligand>
        <name>GTP</name>
        <dbReference type="ChEBI" id="CHEBI:37565"/>
    </ligand>
</feature>
<feature type="binding site" evidence="2">
    <location>
        <begin position="516"/>
        <end position="519"/>
    </location>
    <ligand>
        <name>GTP</name>
        <dbReference type="ChEBI" id="CHEBI:37565"/>
    </ligand>
</feature>
<accession>Q1GXD6</accession>
<organism>
    <name type="scientific">Methylobacillus flagellatus (strain ATCC 51484 / DSM 6875 / VKM B-1610 / KT)</name>
    <dbReference type="NCBI Taxonomy" id="265072"/>
    <lineage>
        <taxon>Bacteria</taxon>
        <taxon>Pseudomonadati</taxon>
        <taxon>Pseudomonadota</taxon>
        <taxon>Betaproteobacteria</taxon>
        <taxon>Nitrosomonadales</taxon>
        <taxon>Methylophilaceae</taxon>
        <taxon>Methylobacillus</taxon>
    </lineage>
</organism>
<gene>
    <name evidence="2" type="primary">infB</name>
    <name type="ordered locus">Mfla_0067</name>
</gene>